<dbReference type="EMBL" id="CP000937">
    <property type="protein sequence ID" value="ABZ86800.1"/>
    <property type="molecule type" value="Genomic_DNA"/>
</dbReference>
<dbReference type="SMR" id="B0U0Y4"/>
<dbReference type="KEGG" id="fph:Fphi_0581"/>
<dbReference type="eggNOG" id="COG0091">
    <property type="taxonomic scope" value="Bacteria"/>
</dbReference>
<dbReference type="HOGENOM" id="CLU_083987_3_3_6"/>
<dbReference type="GO" id="GO:0022625">
    <property type="term" value="C:cytosolic large ribosomal subunit"/>
    <property type="evidence" value="ECO:0007669"/>
    <property type="project" value="TreeGrafter"/>
</dbReference>
<dbReference type="GO" id="GO:0019843">
    <property type="term" value="F:rRNA binding"/>
    <property type="evidence" value="ECO:0007669"/>
    <property type="project" value="UniProtKB-UniRule"/>
</dbReference>
<dbReference type="GO" id="GO:0003735">
    <property type="term" value="F:structural constituent of ribosome"/>
    <property type="evidence" value="ECO:0007669"/>
    <property type="project" value="InterPro"/>
</dbReference>
<dbReference type="GO" id="GO:0006412">
    <property type="term" value="P:translation"/>
    <property type="evidence" value="ECO:0007669"/>
    <property type="project" value="UniProtKB-UniRule"/>
</dbReference>
<dbReference type="CDD" id="cd00336">
    <property type="entry name" value="Ribosomal_L22"/>
    <property type="match status" value="1"/>
</dbReference>
<dbReference type="FunFam" id="3.90.470.10:FF:000001">
    <property type="entry name" value="50S ribosomal protein L22"/>
    <property type="match status" value="1"/>
</dbReference>
<dbReference type="Gene3D" id="3.90.470.10">
    <property type="entry name" value="Ribosomal protein L22/L17"/>
    <property type="match status" value="1"/>
</dbReference>
<dbReference type="HAMAP" id="MF_01331_B">
    <property type="entry name" value="Ribosomal_uL22_B"/>
    <property type="match status" value="1"/>
</dbReference>
<dbReference type="InterPro" id="IPR001063">
    <property type="entry name" value="Ribosomal_uL22"/>
</dbReference>
<dbReference type="InterPro" id="IPR005727">
    <property type="entry name" value="Ribosomal_uL22_bac/chlpt-type"/>
</dbReference>
<dbReference type="InterPro" id="IPR047867">
    <property type="entry name" value="Ribosomal_uL22_bac/org-type"/>
</dbReference>
<dbReference type="InterPro" id="IPR018260">
    <property type="entry name" value="Ribosomal_uL22_CS"/>
</dbReference>
<dbReference type="InterPro" id="IPR036394">
    <property type="entry name" value="Ribosomal_uL22_sf"/>
</dbReference>
<dbReference type="NCBIfam" id="TIGR01044">
    <property type="entry name" value="rplV_bact"/>
    <property type="match status" value="1"/>
</dbReference>
<dbReference type="PANTHER" id="PTHR13501">
    <property type="entry name" value="CHLOROPLAST 50S RIBOSOMAL PROTEIN L22-RELATED"/>
    <property type="match status" value="1"/>
</dbReference>
<dbReference type="PANTHER" id="PTHR13501:SF8">
    <property type="entry name" value="LARGE RIBOSOMAL SUBUNIT PROTEIN UL22M"/>
    <property type="match status" value="1"/>
</dbReference>
<dbReference type="Pfam" id="PF00237">
    <property type="entry name" value="Ribosomal_L22"/>
    <property type="match status" value="1"/>
</dbReference>
<dbReference type="SUPFAM" id="SSF54843">
    <property type="entry name" value="Ribosomal protein L22"/>
    <property type="match status" value="1"/>
</dbReference>
<dbReference type="PROSITE" id="PS00464">
    <property type="entry name" value="RIBOSOMAL_L22"/>
    <property type="match status" value="1"/>
</dbReference>
<name>RL22_FRAP2</name>
<feature type="chain" id="PRO_1000086555" description="Large ribosomal subunit protein uL22">
    <location>
        <begin position="1"/>
        <end position="111"/>
    </location>
</feature>
<comment type="function">
    <text evidence="1">This protein binds specifically to 23S rRNA; its binding is stimulated by other ribosomal proteins, e.g. L4, L17, and L20. It is important during the early stages of 50S assembly. It makes multiple contacts with different domains of the 23S rRNA in the assembled 50S subunit and ribosome (By similarity).</text>
</comment>
<comment type="function">
    <text evidence="1">The globular domain of the protein is located near the polypeptide exit tunnel on the outside of the subunit, while an extended beta-hairpin is found that lines the wall of the exit tunnel in the center of the 70S ribosome.</text>
</comment>
<comment type="subunit">
    <text evidence="1">Part of the 50S ribosomal subunit.</text>
</comment>
<comment type="similarity">
    <text evidence="1">Belongs to the universal ribosomal protein uL22 family.</text>
</comment>
<accession>B0U0Y4</accession>
<sequence length="111" mass="12265">MEVQAKLKFAKISAQKCRLVADQIRGLPVEKAINLLTFSNKKAAVLIKDVLNSAIANAEHNDGMDVDSLFVSTVFVDEGPTMKRFEARAKGRGNRILKRTSHITVKVAEKN</sequence>
<proteinExistence type="inferred from homology"/>
<reference key="1">
    <citation type="submission" date="2007-12" db="EMBL/GenBank/DDBJ databases">
        <title>Complete sequence of chromosome of Francisella philomiragia subsp. philomiragia ATCC 25017.</title>
        <authorList>
            <consortium name="US DOE Joint Genome Institute"/>
            <person name="Copeland A."/>
            <person name="Lucas S."/>
            <person name="Lapidus A."/>
            <person name="Barry K."/>
            <person name="Detter J.C."/>
            <person name="Glavina del Rio T."/>
            <person name="Hammon N."/>
            <person name="Israni S."/>
            <person name="Dalin E."/>
            <person name="Tice H."/>
            <person name="Pitluck S."/>
            <person name="Chain P."/>
            <person name="Malfatti S."/>
            <person name="Shin M."/>
            <person name="Vergez L."/>
            <person name="Schmutz J."/>
            <person name="Larimer F."/>
            <person name="Land M."/>
            <person name="Hauser L."/>
            <person name="Richardson P."/>
        </authorList>
    </citation>
    <scope>NUCLEOTIDE SEQUENCE [LARGE SCALE GENOMIC DNA]</scope>
    <source>
        <strain>ATCC 25017 / CCUG 19701 / FSC 153 / O#319-036</strain>
    </source>
</reference>
<gene>
    <name evidence="1" type="primary">rplV</name>
    <name type="ordered locus">Fphi_0581</name>
</gene>
<keyword id="KW-0687">Ribonucleoprotein</keyword>
<keyword id="KW-0689">Ribosomal protein</keyword>
<keyword id="KW-0694">RNA-binding</keyword>
<keyword id="KW-0699">rRNA-binding</keyword>
<organism>
    <name type="scientific">Francisella philomiragia subsp. philomiragia (strain ATCC 25017 / CCUG 19701 / FSC 153 / O#319-036)</name>
    <dbReference type="NCBI Taxonomy" id="484022"/>
    <lineage>
        <taxon>Bacteria</taxon>
        <taxon>Pseudomonadati</taxon>
        <taxon>Pseudomonadota</taxon>
        <taxon>Gammaproteobacteria</taxon>
        <taxon>Thiotrichales</taxon>
        <taxon>Francisellaceae</taxon>
        <taxon>Francisella</taxon>
    </lineage>
</organism>
<evidence type="ECO:0000255" key="1">
    <source>
        <dbReference type="HAMAP-Rule" id="MF_01331"/>
    </source>
</evidence>
<evidence type="ECO:0000305" key="2"/>
<protein>
    <recommendedName>
        <fullName evidence="1">Large ribosomal subunit protein uL22</fullName>
    </recommendedName>
    <alternativeName>
        <fullName evidence="2">50S ribosomal protein L22</fullName>
    </alternativeName>
</protein>